<proteinExistence type="inferred from homology"/>
<sequence>MTIVVGYLAGKVGPSALHLAVRVARMHKTSLTVATIVRRHWPTPSLARVDAEYELWSEQLAAASAREAQRYLRRLADGIEVSYHHRAHRSVSAGLLDVVEELEAEVLVLGSFPSGRRARVLIGSTADRLLHSSPVPVAITPRRYRCYTDRLTRLSCGYSATSGSVDVVRRCGHLASRYGVPMRVITFAVRGRTMYPPEVGLHAEASVLEAWAAQARELLEKLRINGVVSEDVVLQVVTGNGWAQALDAADWQDGEILALGTSPFGDVARVFLGSWSGKIIRYSPVPVLVLPG</sequence>
<organism>
    <name type="scientific">Mycobacterium bovis (strain ATCC BAA-935 / AF2122/97)</name>
    <dbReference type="NCBI Taxonomy" id="233413"/>
    <lineage>
        <taxon>Bacteria</taxon>
        <taxon>Bacillati</taxon>
        <taxon>Actinomycetota</taxon>
        <taxon>Actinomycetes</taxon>
        <taxon>Mycobacteriales</taxon>
        <taxon>Mycobacteriaceae</taxon>
        <taxon>Mycobacterium</taxon>
        <taxon>Mycobacterium tuberculosis complex</taxon>
    </lineage>
</organism>
<accession>P64996</accession>
<accession>A0A1R3Y0S4</accession>
<accession>P71893</accession>
<accession>X2BKH4</accession>
<gene>
    <name type="ordered locus">BQ2027_MB2346C</name>
</gene>
<protein>
    <recommendedName>
        <fullName>Universal stress protein Mb2346c</fullName>
        <shortName>USP Mb2346c</shortName>
    </recommendedName>
</protein>
<keyword id="KW-1185">Reference proteome</keyword>
<comment type="similarity">
    <text evidence="1">Belongs to the universal stress protein A family.</text>
</comment>
<reference key="1">
    <citation type="journal article" date="2003" name="Proc. Natl. Acad. Sci. U.S.A.">
        <title>The complete genome sequence of Mycobacterium bovis.</title>
        <authorList>
            <person name="Garnier T."/>
            <person name="Eiglmeier K."/>
            <person name="Camus J.-C."/>
            <person name="Medina N."/>
            <person name="Mansoor H."/>
            <person name="Pryor M."/>
            <person name="Duthoy S."/>
            <person name="Grondin S."/>
            <person name="Lacroix C."/>
            <person name="Monsempe C."/>
            <person name="Simon S."/>
            <person name="Harris B."/>
            <person name="Atkin R."/>
            <person name="Doggett J."/>
            <person name="Mayes R."/>
            <person name="Keating L."/>
            <person name="Wheeler P.R."/>
            <person name="Parkhill J."/>
            <person name="Barrell B.G."/>
            <person name="Cole S.T."/>
            <person name="Gordon S.V."/>
            <person name="Hewinson R.G."/>
        </authorList>
    </citation>
    <scope>NUCLEOTIDE SEQUENCE [LARGE SCALE GENOMIC DNA]</scope>
    <source>
        <strain>ATCC BAA-935 / AF2122/97</strain>
    </source>
</reference>
<reference key="2">
    <citation type="journal article" date="2017" name="Genome Announc.">
        <title>Updated reference genome sequence and annotation of Mycobacterium bovis AF2122/97.</title>
        <authorList>
            <person name="Malone K.M."/>
            <person name="Farrell D."/>
            <person name="Stuber T.P."/>
            <person name="Schubert O.T."/>
            <person name="Aebersold R."/>
            <person name="Robbe-Austerman S."/>
            <person name="Gordon S.V."/>
        </authorList>
    </citation>
    <scope>NUCLEOTIDE SEQUENCE [LARGE SCALE GENOMIC DNA]</scope>
    <scope>GENOME REANNOTATION</scope>
    <source>
        <strain>ATCC BAA-935 / AF2122/97</strain>
    </source>
</reference>
<evidence type="ECO:0000305" key="1"/>
<dbReference type="EMBL" id="LT708304">
    <property type="protein sequence ID" value="SIU00958.1"/>
    <property type="molecule type" value="Genomic_DNA"/>
</dbReference>
<dbReference type="RefSeq" id="NP_855995.1">
    <property type="nucleotide sequence ID" value="NC_002945.3"/>
</dbReference>
<dbReference type="RefSeq" id="WP_003411952.1">
    <property type="nucleotide sequence ID" value="NC_002945.4"/>
</dbReference>
<dbReference type="SMR" id="P64996"/>
<dbReference type="KEGG" id="mbo:BQ2027_MB2346C"/>
<dbReference type="PATRIC" id="fig|233413.5.peg.2573"/>
<dbReference type="Proteomes" id="UP000001419">
    <property type="component" value="Chromosome"/>
</dbReference>
<dbReference type="CDD" id="cd00293">
    <property type="entry name" value="USP-like"/>
    <property type="match status" value="2"/>
</dbReference>
<dbReference type="Gene3D" id="3.40.50.12370">
    <property type="match status" value="1"/>
</dbReference>
<dbReference type="InterPro" id="IPR006015">
    <property type="entry name" value="Universal_stress_UspA"/>
</dbReference>
<dbReference type="InterPro" id="IPR051688">
    <property type="entry name" value="USP_A"/>
</dbReference>
<dbReference type="InterPro" id="IPR006016">
    <property type="entry name" value="UspA"/>
</dbReference>
<dbReference type="PANTHER" id="PTHR43010">
    <property type="entry name" value="UNIVERSAL STRESS PROTEIN SLR1230"/>
    <property type="match status" value="1"/>
</dbReference>
<dbReference type="PANTHER" id="PTHR43010:SF1">
    <property type="entry name" value="USPA DOMAIN-CONTAINING PROTEIN"/>
    <property type="match status" value="1"/>
</dbReference>
<dbReference type="Pfam" id="PF00582">
    <property type="entry name" value="Usp"/>
    <property type="match status" value="2"/>
</dbReference>
<dbReference type="PRINTS" id="PR01438">
    <property type="entry name" value="UNVRSLSTRESS"/>
</dbReference>
<dbReference type="SUPFAM" id="SSF52402">
    <property type="entry name" value="Adenine nucleotide alpha hydrolases-like"/>
    <property type="match status" value="2"/>
</dbReference>
<name>Y2346_MYCBO</name>
<feature type="chain" id="PRO_0000104027" description="Universal stress protein Mb2346c">
    <location>
        <begin position="1"/>
        <end position="292"/>
    </location>
</feature>